<dbReference type="EMBL" id="EU273602">
    <property type="protein sequence ID" value="ABX38740.1"/>
    <property type="molecule type" value="Genomic_DNA"/>
</dbReference>
<dbReference type="RefSeq" id="YP_001586178.2">
    <property type="nucleotide sequence ID" value="NC_010093.1"/>
</dbReference>
<dbReference type="SMR" id="A9LYI1"/>
<dbReference type="GeneID" id="5777723"/>
<dbReference type="GO" id="GO:0009535">
    <property type="term" value="C:chloroplast thylakoid membrane"/>
    <property type="evidence" value="ECO:0007669"/>
    <property type="project" value="UniProtKB-SubCell"/>
</dbReference>
<dbReference type="GO" id="GO:0009523">
    <property type="term" value="C:photosystem II"/>
    <property type="evidence" value="ECO:0007669"/>
    <property type="project" value="UniProtKB-KW"/>
</dbReference>
<dbReference type="GO" id="GO:0016168">
    <property type="term" value="F:chlorophyll binding"/>
    <property type="evidence" value="ECO:0007669"/>
    <property type="project" value="UniProtKB-UniRule"/>
</dbReference>
<dbReference type="GO" id="GO:0045156">
    <property type="term" value="F:electron transporter, transferring electrons within the cyclic electron transport pathway of photosynthesis activity"/>
    <property type="evidence" value="ECO:0007669"/>
    <property type="project" value="InterPro"/>
</dbReference>
<dbReference type="GO" id="GO:0046872">
    <property type="term" value="F:metal ion binding"/>
    <property type="evidence" value="ECO:0007669"/>
    <property type="project" value="UniProtKB-KW"/>
</dbReference>
<dbReference type="GO" id="GO:0009772">
    <property type="term" value="P:photosynthetic electron transport in photosystem II"/>
    <property type="evidence" value="ECO:0007669"/>
    <property type="project" value="InterPro"/>
</dbReference>
<dbReference type="FunFam" id="1.10.10.670:FF:000001">
    <property type="entry name" value="Photosystem II CP43 reaction center protein"/>
    <property type="match status" value="1"/>
</dbReference>
<dbReference type="Gene3D" id="1.10.10.670">
    <property type="entry name" value="photosystem ii from thermosynechococcus elongatus"/>
    <property type="match status" value="1"/>
</dbReference>
<dbReference type="HAMAP" id="MF_01496">
    <property type="entry name" value="PSII_PsbC_CP43"/>
    <property type="match status" value="1"/>
</dbReference>
<dbReference type="InterPro" id="IPR000932">
    <property type="entry name" value="PS_antenna-like"/>
</dbReference>
<dbReference type="InterPro" id="IPR036001">
    <property type="entry name" value="PS_II_antenna-like_sf"/>
</dbReference>
<dbReference type="InterPro" id="IPR005869">
    <property type="entry name" value="PSII_PsbC"/>
</dbReference>
<dbReference type="InterPro" id="IPR044900">
    <property type="entry name" value="PSII_PsbC_sf"/>
</dbReference>
<dbReference type="NCBIfam" id="TIGR01153">
    <property type="entry name" value="psbC"/>
    <property type="match status" value="1"/>
</dbReference>
<dbReference type="Pfam" id="PF00421">
    <property type="entry name" value="PSII"/>
    <property type="match status" value="1"/>
</dbReference>
<dbReference type="SUPFAM" id="SSF161077">
    <property type="entry name" value="Photosystem II antenna protein-like"/>
    <property type="match status" value="1"/>
</dbReference>
<keyword id="KW-0007">Acetylation</keyword>
<keyword id="KW-0148">Chlorophyll</keyword>
<keyword id="KW-0150">Chloroplast</keyword>
<keyword id="KW-0157">Chromophore</keyword>
<keyword id="KW-0464">Manganese</keyword>
<keyword id="KW-0472">Membrane</keyword>
<keyword id="KW-0479">Metal-binding</keyword>
<keyword id="KW-0597">Phosphoprotein</keyword>
<keyword id="KW-0602">Photosynthesis</keyword>
<keyword id="KW-0604">Photosystem II</keyword>
<keyword id="KW-0934">Plastid</keyword>
<keyword id="KW-0793">Thylakoid</keyword>
<keyword id="KW-0812">Transmembrane</keyword>
<keyword id="KW-1133">Transmembrane helix</keyword>
<accession>A9LYI1</accession>
<geneLocation type="chloroplast"/>
<gene>
    <name evidence="1" type="primary">psbC</name>
</gene>
<proteinExistence type="inferred from homology"/>
<comment type="function">
    <text evidence="1">One of the components of the core complex of photosystem II (PSII). It binds chlorophyll and helps catalyze the primary light-induced photochemical processes of PSII. PSII is a light-driven water:plastoquinone oxidoreductase, using light energy to abstract electrons from H(2)O, generating O(2) and a proton gradient subsequently used for ATP formation.</text>
</comment>
<comment type="cofactor">
    <text evidence="1">Binds multiple chlorophylls and provides some of the ligands for the Ca-4Mn-5O cluster of the oxygen-evolving complex. It may also provide a ligand for a Cl- that is required for oxygen evolution. PSII binds additional chlorophylls, carotenoids and specific lipids.</text>
</comment>
<comment type="subunit">
    <text evidence="1">PSII is composed of 1 copy each of membrane proteins PsbA, PsbB, PsbC, PsbD, PsbE, PsbF, PsbH, PsbI, PsbJ, PsbK, PsbL, PsbM, PsbT, PsbX, PsbY, PsbZ, Psb30/Ycf12, at least 3 peripheral proteins of the oxygen-evolving complex and a large number of cofactors. It forms dimeric complexes.</text>
</comment>
<comment type="subcellular location">
    <subcellularLocation>
        <location evidence="1">Plastid</location>
        <location evidence="1">Chloroplast thylakoid membrane</location>
        <topology evidence="1">Multi-pass membrane protein</topology>
    </subcellularLocation>
</comment>
<comment type="similarity">
    <text evidence="1">Belongs to the PsbB/PsbC family. PsbC subfamily.</text>
</comment>
<reference key="1">
    <citation type="submission" date="2007-11" db="EMBL/GenBank/DDBJ databases">
        <title>The complete chloroplast genome of Acorus americanus.</title>
        <authorList>
            <person name="Peery R.M."/>
            <person name="Chumley T.W."/>
            <person name="Kuehl J.V."/>
            <person name="Boore J.L."/>
            <person name="Raubeson L.A."/>
        </authorList>
    </citation>
    <scope>NUCLEOTIDE SEQUENCE [LARGE SCALE GENOMIC DNA]</scope>
</reference>
<protein>
    <recommendedName>
        <fullName evidence="1">Photosystem II CP43 reaction center protein</fullName>
    </recommendedName>
    <alternativeName>
        <fullName evidence="1">PSII 43 kDa protein</fullName>
    </alternativeName>
    <alternativeName>
        <fullName evidence="1">Protein CP-43</fullName>
    </alternativeName>
</protein>
<evidence type="ECO:0000255" key="1">
    <source>
        <dbReference type="HAMAP-Rule" id="MF_01496"/>
    </source>
</evidence>
<name>PSBC_ACOCI</name>
<sequence>MKTLYSLRRFYPVETLFNGTLALAGRDQETTGFAWWAGNARLINLSGKLLGAHVAHAGLIVFWAGAMNLFEVAHFVPEKPMYEQGLILLPHLATLGWGVGPGGEVIDTFPYFVSGVLHLISSAVLGFGGIYHALLGPETLEESFPFFGYVWKDRNKMTTILGIHLILLGIGAFLLVFKALYFGGVYDTWAPGGGDVRKITNLTLSPSVIFGYLLKSPFGGEGWIVSVDDLEDIIGGHVWLGSICILGGIWHILTKPFAWARRAFVWSGEAYLSYSLGALAVFGFIACCFVWFNNTAYPSEFYGPTGPEASQAQAFTFLVRDQRLGANVGSAQGPTGLGKYLMRSPTGEVIFGGETMRFWDLRAPWLEPLRGPNGLDLSRLKKDIQPWQERRSAEYMTHAPLGSLNSVGGVATEINAVNYVSPRSWLATSHFVLGFFFFVGHLWHAGRARAAAAGFEKGIDRDLEPVLSMTPLN</sequence>
<organism>
    <name type="scientific">Acorus calamus var. americanus</name>
    <name type="common">American sweet flag</name>
    <name type="synonym">Acorus americanus</name>
    <dbReference type="NCBI Taxonomy" id="263995"/>
    <lineage>
        <taxon>Eukaryota</taxon>
        <taxon>Viridiplantae</taxon>
        <taxon>Streptophyta</taxon>
        <taxon>Embryophyta</taxon>
        <taxon>Tracheophyta</taxon>
        <taxon>Spermatophyta</taxon>
        <taxon>Magnoliopsida</taxon>
        <taxon>Liliopsida</taxon>
        <taxon>Acoraceae</taxon>
        <taxon>Acorus</taxon>
    </lineage>
</organism>
<feature type="propeptide" id="PRO_0000431103" evidence="1">
    <location>
        <begin position="1"/>
        <end position="14"/>
    </location>
</feature>
<feature type="chain" id="PRO_0000361305" description="Photosystem II CP43 reaction center protein" evidence="1">
    <location>
        <begin position="15"/>
        <end position="473"/>
    </location>
</feature>
<feature type="transmembrane region" description="Helical" evidence="1">
    <location>
        <begin position="69"/>
        <end position="93"/>
    </location>
</feature>
<feature type="transmembrane region" description="Helical" evidence="1">
    <location>
        <begin position="134"/>
        <end position="155"/>
    </location>
</feature>
<feature type="transmembrane region" description="Helical" evidence="1">
    <location>
        <begin position="178"/>
        <end position="200"/>
    </location>
</feature>
<feature type="transmembrane region" description="Helical" evidence="1">
    <location>
        <begin position="255"/>
        <end position="275"/>
    </location>
</feature>
<feature type="transmembrane region" description="Helical" evidence="1">
    <location>
        <begin position="291"/>
        <end position="312"/>
    </location>
</feature>
<feature type="transmembrane region" description="Helical" evidence="1">
    <location>
        <begin position="447"/>
        <end position="471"/>
    </location>
</feature>
<feature type="binding site" evidence="1">
    <location>
        <position position="367"/>
    </location>
    <ligand>
        <name>[CaMn4O5] cluster</name>
        <dbReference type="ChEBI" id="CHEBI:189552"/>
    </ligand>
</feature>
<feature type="modified residue" description="N-acetylthreonine" evidence="1">
    <location>
        <position position="15"/>
    </location>
</feature>
<feature type="modified residue" description="Phosphothreonine" evidence="1">
    <location>
        <position position="15"/>
    </location>
</feature>